<sequence>MSNISNDSGLDDSANSGAVVSANGPLAATRLSWFLAEVDDGLMKDGKPNGRRRLCVLHSMELLESDVSDKYMTRFVEFRVNGMVLEAKLILAADERRLVDAALLSMSKEEREDAGGQQLLVQYTENEKAGERLIQKLVSPNNVMLLSTKPELKGNPLVRLAPGCIAHILYAYESRDYMEKILLHLKARSFDLAFDDNLEAEPEAMNDDTWMLVQYSPEPEMVVYQVVQYRQTVWRKENLFKDVIAYMQLPGSDIVLQAVVISYGQDKEVQDAKYEELQRFSFDIDFPLPEELEKHPDHMTSTALFSRTSLYQKAEQRDTTGEHRELRKSLEQMSEKAQGEAQMIIDAFDMVDNINKNLQSRLSGEVRSVVEVTSGDELH</sequence>
<protein>
    <recommendedName>
        <fullName evidence="3">Early boundary activity protein 3</fullName>
    </recommendedName>
</protein>
<evidence type="ECO:0000269" key="1">
    <source>
    </source>
</evidence>
<evidence type="ECO:0000269" key="2">
    <source>
    </source>
</evidence>
<evidence type="ECO:0000303" key="3">
    <source>
    </source>
</evidence>
<evidence type="ECO:0000312" key="4">
    <source>
        <dbReference type="FlyBase" id="FBgn0031621"/>
    </source>
</evidence>
<reference key="1">
    <citation type="journal article" date="2000" name="Science">
        <title>The genome sequence of Drosophila melanogaster.</title>
        <authorList>
            <person name="Adams M.D."/>
            <person name="Celniker S.E."/>
            <person name="Holt R.A."/>
            <person name="Evans C.A."/>
            <person name="Gocayne J.D."/>
            <person name="Amanatides P.G."/>
            <person name="Scherer S.E."/>
            <person name="Li P.W."/>
            <person name="Hoskins R.A."/>
            <person name="Galle R.F."/>
            <person name="George R.A."/>
            <person name="Lewis S.E."/>
            <person name="Richards S."/>
            <person name="Ashburner M."/>
            <person name="Henderson S.N."/>
            <person name="Sutton G.G."/>
            <person name="Wortman J.R."/>
            <person name="Yandell M.D."/>
            <person name="Zhang Q."/>
            <person name="Chen L.X."/>
            <person name="Brandon R.C."/>
            <person name="Rogers Y.-H.C."/>
            <person name="Blazej R.G."/>
            <person name="Champe M."/>
            <person name="Pfeiffer B.D."/>
            <person name="Wan K.H."/>
            <person name="Doyle C."/>
            <person name="Baxter E.G."/>
            <person name="Helt G."/>
            <person name="Nelson C.R."/>
            <person name="Miklos G.L.G."/>
            <person name="Abril J.F."/>
            <person name="Agbayani A."/>
            <person name="An H.-J."/>
            <person name="Andrews-Pfannkoch C."/>
            <person name="Baldwin D."/>
            <person name="Ballew R.M."/>
            <person name="Basu A."/>
            <person name="Baxendale J."/>
            <person name="Bayraktaroglu L."/>
            <person name="Beasley E.M."/>
            <person name="Beeson K.Y."/>
            <person name="Benos P.V."/>
            <person name="Berman B.P."/>
            <person name="Bhandari D."/>
            <person name="Bolshakov S."/>
            <person name="Borkova D."/>
            <person name="Botchan M.R."/>
            <person name="Bouck J."/>
            <person name="Brokstein P."/>
            <person name="Brottier P."/>
            <person name="Burtis K.C."/>
            <person name="Busam D.A."/>
            <person name="Butler H."/>
            <person name="Cadieu E."/>
            <person name="Center A."/>
            <person name="Chandra I."/>
            <person name="Cherry J.M."/>
            <person name="Cawley S."/>
            <person name="Dahlke C."/>
            <person name="Davenport L.B."/>
            <person name="Davies P."/>
            <person name="de Pablos B."/>
            <person name="Delcher A."/>
            <person name="Deng Z."/>
            <person name="Mays A.D."/>
            <person name="Dew I."/>
            <person name="Dietz S.M."/>
            <person name="Dodson K."/>
            <person name="Doup L.E."/>
            <person name="Downes M."/>
            <person name="Dugan-Rocha S."/>
            <person name="Dunkov B.C."/>
            <person name="Dunn P."/>
            <person name="Durbin K.J."/>
            <person name="Evangelista C.C."/>
            <person name="Ferraz C."/>
            <person name="Ferriera S."/>
            <person name="Fleischmann W."/>
            <person name="Fosler C."/>
            <person name="Gabrielian A.E."/>
            <person name="Garg N.S."/>
            <person name="Gelbart W.M."/>
            <person name="Glasser K."/>
            <person name="Glodek A."/>
            <person name="Gong F."/>
            <person name="Gorrell J.H."/>
            <person name="Gu Z."/>
            <person name="Guan P."/>
            <person name="Harris M."/>
            <person name="Harris N.L."/>
            <person name="Harvey D.A."/>
            <person name="Heiman T.J."/>
            <person name="Hernandez J.R."/>
            <person name="Houck J."/>
            <person name="Hostin D."/>
            <person name="Houston K.A."/>
            <person name="Howland T.J."/>
            <person name="Wei M.-H."/>
            <person name="Ibegwam C."/>
            <person name="Jalali M."/>
            <person name="Kalush F."/>
            <person name="Karpen G.H."/>
            <person name="Ke Z."/>
            <person name="Kennison J.A."/>
            <person name="Ketchum K.A."/>
            <person name="Kimmel B.E."/>
            <person name="Kodira C.D."/>
            <person name="Kraft C.L."/>
            <person name="Kravitz S."/>
            <person name="Kulp D."/>
            <person name="Lai Z."/>
            <person name="Lasko P."/>
            <person name="Lei Y."/>
            <person name="Levitsky A.A."/>
            <person name="Li J.H."/>
            <person name="Li Z."/>
            <person name="Liang Y."/>
            <person name="Lin X."/>
            <person name="Liu X."/>
            <person name="Mattei B."/>
            <person name="McIntosh T.C."/>
            <person name="McLeod M.P."/>
            <person name="McPherson D."/>
            <person name="Merkulov G."/>
            <person name="Milshina N.V."/>
            <person name="Mobarry C."/>
            <person name="Morris J."/>
            <person name="Moshrefi A."/>
            <person name="Mount S.M."/>
            <person name="Moy M."/>
            <person name="Murphy B."/>
            <person name="Murphy L."/>
            <person name="Muzny D.M."/>
            <person name="Nelson D.L."/>
            <person name="Nelson D.R."/>
            <person name="Nelson K.A."/>
            <person name="Nixon K."/>
            <person name="Nusskern D.R."/>
            <person name="Pacleb J.M."/>
            <person name="Palazzolo M."/>
            <person name="Pittman G.S."/>
            <person name="Pan S."/>
            <person name="Pollard J."/>
            <person name="Puri V."/>
            <person name="Reese M.G."/>
            <person name="Reinert K."/>
            <person name="Remington K."/>
            <person name="Saunders R.D.C."/>
            <person name="Scheeler F."/>
            <person name="Shen H."/>
            <person name="Shue B.C."/>
            <person name="Siden-Kiamos I."/>
            <person name="Simpson M."/>
            <person name="Skupski M.P."/>
            <person name="Smith T.J."/>
            <person name="Spier E."/>
            <person name="Spradling A.C."/>
            <person name="Stapleton M."/>
            <person name="Strong R."/>
            <person name="Sun E."/>
            <person name="Svirskas R."/>
            <person name="Tector C."/>
            <person name="Turner R."/>
            <person name="Venter E."/>
            <person name="Wang A.H."/>
            <person name="Wang X."/>
            <person name="Wang Z.-Y."/>
            <person name="Wassarman D.A."/>
            <person name="Weinstock G.M."/>
            <person name="Weissenbach J."/>
            <person name="Williams S.M."/>
            <person name="Woodage T."/>
            <person name="Worley K.C."/>
            <person name="Wu D."/>
            <person name="Yang S."/>
            <person name="Yao Q.A."/>
            <person name="Ye J."/>
            <person name="Yeh R.-F."/>
            <person name="Zaveri J.S."/>
            <person name="Zhan M."/>
            <person name="Zhang G."/>
            <person name="Zhao Q."/>
            <person name="Zheng L."/>
            <person name="Zheng X.H."/>
            <person name="Zhong F.N."/>
            <person name="Zhong W."/>
            <person name="Zhou X."/>
            <person name="Zhu S.C."/>
            <person name="Zhu X."/>
            <person name="Smith H.O."/>
            <person name="Gibbs R.A."/>
            <person name="Myers E.W."/>
            <person name="Rubin G.M."/>
            <person name="Venter J.C."/>
        </authorList>
    </citation>
    <scope>NUCLEOTIDE SEQUENCE [LARGE SCALE GENOMIC DNA]</scope>
    <source>
        <strain>Berkeley</strain>
    </source>
</reference>
<reference key="2">
    <citation type="journal article" date="2002" name="Genome Biol.">
        <title>Annotation of the Drosophila melanogaster euchromatic genome: a systematic review.</title>
        <authorList>
            <person name="Misra S."/>
            <person name="Crosby M.A."/>
            <person name="Mungall C.J."/>
            <person name="Matthews B.B."/>
            <person name="Campbell K.S."/>
            <person name="Hradecky P."/>
            <person name="Huang Y."/>
            <person name="Kaminker J.S."/>
            <person name="Millburn G.H."/>
            <person name="Prochnik S.E."/>
            <person name="Smith C.D."/>
            <person name="Tupy J.L."/>
            <person name="Whitfield E.J."/>
            <person name="Bayraktaroglu L."/>
            <person name="Berman B.P."/>
            <person name="Bettencourt B.R."/>
            <person name="Celniker S.E."/>
            <person name="de Grey A.D.N.J."/>
            <person name="Drysdale R.A."/>
            <person name="Harris N.L."/>
            <person name="Richter J."/>
            <person name="Russo S."/>
            <person name="Schroeder A.J."/>
            <person name="Shu S.Q."/>
            <person name="Stapleton M."/>
            <person name="Yamada C."/>
            <person name="Ashburner M."/>
            <person name="Gelbart W.M."/>
            <person name="Rubin G.M."/>
            <person name="Lewis S.E."/>
        </authorList>
    </citation>
    <scope>GENOME REANNOTATION</scope>
    <source>
        <strain>Berkeley</strain>
    </source>
</reference>
<reference key="3">
    <citation type="journal article" date="2002" name="Genome Biol.">
        <title>A Drosophila full-length cDNA resource.</title>
        <authorList>
            <person name="Stapleton M."/>
            <person name="Carlson J.W."/>
            <person name="Brokstein P."/>
            <person name="Yu C."/>
            <person name="Champe M."/>
            <person name="George R.A."/>
            <person name="Guarin H."/>
            <person name="Kronmiller B."/>
            <person name="Pacleb J.M."/>
            <person name="Park S."/>
            <person name="Wan K.H."/>
            <person name="Rubin G.M."/>
            <person name="Celniker S.E."/>
        </authorList>
    </citation>
    <scope>NUCLEOTIDE SEQUENCE [LARGE SCALE MRNA]</scope>
    <source>
        <strain>Berkeley</strain>
        <tissue>Head</tissue>
    </source>
</reference>
<reference key="4">
    <citation type="journal article" date="2012" name="Elife">
        <title>Elba, a novel developmentally regulated chromatin boundary factor is a hetero-tripartite DNA binding complex.</title>
        <authorList>
            <person name="Aoki T."/>
            <person name="Sarkeshik A."/>
            <person name="Yates J."/>
            <person name="Schedl P."/>
        </authorList>
    </citation>
    <scope>IDENTIFICATION BY MASS SPECTROMETRY</scope>
    <scope>FUNCTION</scope>
    <scope>SUBUNIT</scope>
    <scope>SUBCELLULAR LOCATION</scope>
    <scope>DEVELOPMENTAL STAGE</scope>
</reference>
<reference key="5">
    <citation type="journal article" date="2015" name="Genes Dev.">
        <title>Common and distinct DNA-binding and regulatory activities of the BEN-solo transcription factor family.</title>
        <authorList>
            <person name="Dai Q."/>
            <person name="Ren A."/>
            <person name="Westholm J.O."/>
            <person name="Duan H."/>
            <person name="Patel D.J."/>
            <person name="Lai E.C."/>
        </authorList>
    </citation>
    <scope>DEVELOPMENTAL STAGE</scope>
</reference>
<organism>
    <name type="scientific">Drosophila melanogaster</name>
    <name type="common">Fruit fly</name>
    <dbReference type="NCBI Taxonomy" id="7227"/>
    <lineage>
        <taxon>Eukaryota</taxon>
        <taxon>Metazoa</taxon>
        <taxon>Ecdysozoa</taxon>
        <taxon>Arthropoda</taxon>
        <taxon>Hexapoda</taxon>
        <taxon>Insecta</taxon>
        <taxon>Pterygota</taxon>
        <taxon>Neoptera</taxon>
        <taxon>Endopterygota</taxon>
        <taxon>Diptera</taxon>
        <taxon>Brachycera</taxon>
        <taxon>Muscomorpha</taxon>
        <taxon>Ephydroidea</taxon>
        <taxon>Drosophilidae</taxon>
        <taxon>Drosophila</taxon>
        <taxon>Sophophora</taxon>
    </lineage>
</organism>
<name>ELBA3_DROME</name>
<feature type="chain" id="PRO_0000434592" description="Early boundary activity protein 3">
    <location>
        <begin position="1"/>
        <end position="379"/>
    </location>
</feature>
<gene>
    <name evidence="3 4" type="primary">Elba3</name>
    <name evidence="4" type="ORF">CG15634</name>
</gene>
<comment type="function">
    <text evidence="1">The heterotrimeric Elba complex is required for chromatin domain boundary function during early embryogenesis. It binds to a 8-bp sequence 5'-CCAATAAG-3' in the Fab-7 insulator or boundary element in the bithorax complex and contributes to its insulator or boundary activity. Elba3 lacks DNA-binding activity and plays the role of an adapter protein, bringing Elba1 and 2 together, thereby establishing a complex that recognizes the asymmetric sequence motif through the BEN domains of Elba1 and 2 (PubMed:23240086).</text>
</comment>
<comment type="subunit">
    <text evidence="1">The heterotrimeric Elba complex consists of Elba1, Elba2 and Elba3.</text>
</comment>
<comment type="subcellular location">
    <subcellularLocation>
        <location evidence="1">Nucleus</location>
    </subcellularLocation>
</comment>
<comment type="developmental stage">
    <text evidence="1 2">Expression is developmentally restricted, peaks at the blastoderm stage (2-4 hours) and then disappears (at protein level).</text>
</comment>
<proteinExistence type="evidence at protein level"/>
<accession>Q9VR19</accession>
<dbReference type="EMBL" id="AE014134">
    <property type="protein sequence ID" value="AAF50989.1"/>
    <property type="molecule type" value="Genomic_DNA"/>
</dbReference>
<dbReference type="EMBL" id="AY051954">
    <property type="protein sequence ID" value="AAK93378.1"/>
    <property type="molecule type" value="mRNA"/>
</dbReference>
<dbReference type="RefSeq" id="NP_608850.1">
    <property type="nucleotide sequence ID" value="NM_135006.3"/>
</dbReference>
<dbReference type="ComplexPortal" id="CPX-2439">
    <property type="entry name" value="ELBA boundary factor complex"/>
</dbReference>
<dbReference type="FunCoup" id="Q9VR19">
    <property type="interactions" value="46"/>
</dbReference>
<dbReference type="IntAct" id="Q9VR19">
    <property type="interactions" value="10"/>
</dbReference>
<dbReference type="STRING" id="7227.FBpp0077070"/>
<dbReference type="PaxDb" id="7227-FBpp0077070"/>
<dbReference type="DNASU" id="33670"/>
<dbReference type="EnsemblMetazoa" id="FBtr0077378">
    <property type="protein sequence ID" value="FBpp0077070"/>
    <property type="gene ID" value="FBgn0031621"/>
</dbReference>
<dbReference type="GeneID" id="33670"/>
<dbReference type="KEGG" id="dme:Dmel_CG15634"/>
<dbReference type="UCSC" id="CG15634-RA">
    <property type="organism name" value="d. melanogaster"/>
</dbReference>
<dbReference type="AGR" id="FB:FBgn0031621"/>
<dbReference type="CTD" id="33670"/>
<dbReference type="FlyBase" id="FBgn0031621">
    <property type="gene designation" value="Elba3"/>
</dbReference>
<dbReference type="VEuPathDB" id="VectorBase:FBgn0031621"/>
<dbReference type="eggNOG" id="ENOG502T8EF">
    <property type="taxonomic scope" value="Eukaryota"/>
</dbReference>
<dbReference type="HOGENOM" id="CLU_730109_0_0_1"/>
<dbReference type="InParanoid" id="Q9VR19"/>
<dbReference type="OMA" id="RCFDHAF"/>
<dbReference type="OrthoDB" id="7923961at2759"/>
<dbReference type="PhylomeDB" id="Q9VR19"/>
<dbReference type="BioGRID-ORCS" id="33670">
    <property type="hits" value="0 hits in 1 CRISPR screen"/>
</dbReference>
<dbReference type="GenomeRNAi" id="33670"/>
<dbReference type="PRO" id="PR:Q9VR19"/>
<dbReference type="Proteomes" id="UP000000803">
    <property type="component" value="Chromosome 2L"/>
</dbReference>
<dbReference type="Bgee" id="FBgn0031621">
    <property type="expression patterns" value="Expressed in cleaving embryo and 4 other cell types or tissues"/>
</dbReference>
<dbReference type="GO" id="GO:0005677">
    <property type="term" value="C:chromatin silencing complex"/>
    <property type="evidence" value="ECO:0000314"/>
    <property type="project" value="FlyBase"/>
</dbReference>
<dbReference type="GO" id="GO:0005634">
    <property type="term" value="C:nucleus"/>
    <property type="evidence" value="ECO:0000314"/>
    <property type="project" value="FlyBase"/>
</dbReference>
<dbReference type="GO" id="GO:0030674">
    <property type="term" value="F:protein-macromolecule adaptor activity"/>
    <property type="evidence" value="ECO:0000314"/>
    <property type="project" value="FlyBase"/>
</dbReference>
<dbReference type="GO" id="GO:0033696">
    <property type="term" value="P:heterochromatin boundary formation"/>
    <property type="evidence" value="ECO:0000315"/>
    <property type="project" value="FlyBase"/>
</dbReference>
<keyword id="KW-0539">Nucleus</keyword>
<keyword id="KW-1185">Reference proteome</keyword>